<evidence type="ECO:0000305" key="1"/>
<evidence type="ECO:0007829" key="2">
    <source>
        <dbReference type="PDB" id="1PRT"/>
    </source>
</evidence>
<evidence type="ECO:0007829" key="3">
    <source>
        <dbReference type="PDB" id="1PTO"/>
    </source>
</evidence>
<evidence type="ECO:0007829" key="4">
    <source>
        <dbReference type="PDB" id="6RO0"/>
    </source>
</evidence>
<keyword id="KW-0002">3D-structure</keyword>
<keyword id="KW-1015">Disulfide bond</keyword>
<keyword id="KW-1032">Host cell membrane</keyword>
<keyword id="KW-1043">Host membrane</keyword>
<keyword id="KW-0472">Membrane</keyword>
<keyword id="KW-1185">Reference proteome</keyword>
<keyword id="KW-0964">Secreted</keyword>
<keyword id="KW-0732">Signal</keyword>
<keyword id="KW-0800">Toxin</keyword>
<keyword id="KW-0843">Virulence</keyword>
<keyword id="KW-0855">Whooping cough</keyword>
<organism>
    <name type="scientific">Bordetella pertussis (strain Tohama I / ATCC BAA-589 / NCTC 13251)</name>
    <dbReference type="NCBI Taxonomy" id="257313"/>
    <lineage>
        <taxon>Bacteria</taxon>
        <taxon>Pseudomonadati</taxon>
        <taxon>Pseudomonadota</taxon>
        <taxon>Betaproteobacteria</taxon>
        <taxon>Burkholderiales</taxon>
        <taxon>Alcaligenaceae</taxon>
        <taxon>Bordetella</taxon>
    </lineage>
</organism>
<dbReference type="EMBL" id="M14378">
    <property type="protein sequence ID" value="AAA83983.1"/>
    <property type="molecule type" value="Genomic_DNA"/>
</dbReference>
<dbReference type="EMBL" id="M13223">
    <property type="protein sequence ID" value="AAA22984.1"/>
    <property type="status" value="ALT_INIT"/>
    <property type="molecule type" value="Genomic_DNA"/>
</dbReference>
<dbReference type="EMBL" id="BX640422">
    <property type="protein sequence ID" value="CAE44041.1"/>
    <property type="molecule type" value="Genomic_DNA"/>
</dbReference>
<dbReference type="PIR" id="E24394">
    <property type="entry name" value="WEBR51"/>
</dbReference>
<dbReference type="RefSeq" id="NP_882285.1">
    <property type="nucleotide sequence ID" value="NC_002929.2"/>
</dbReference>
<dbReference type="PDB" id="1BCP">
    <property type="method" value="X-ray"/>
    <property type="resolution" value="2.70 A"/>
    <property type="chains" value="F/L=35-133"/>
</dbReference>
<dbReference type="PDB" id="1PRT">
    <property type="method" value="X-ray"/>
    <property type="resolution" value="2.90 A"/>
    <property type="chains" value="F/L=36-133"/>
</dbReference>
<dbReference type="PDB" id="1PTO">
    <property type="method" value="X-ray"/>
    <property type="resolution" value="3.50 A"/>
    <property type="chains" value="F/L=36-133"/>
</dbReference>
<dbReference type="PDB" id="6RO0">
    <property type="method" value="X-ray"/>
    <property type="resolution" value="2.13 A"/>
    <property type="chains" value="F/L=1-133"/>
</dbReference>
<dbReference type="PDBsum" id="1BCP"/>
<dbReference type="PDBsum" id="1PRT"/>
<dbReference type="PDBsum" id="1PTO"/>
<dbReference type="PDBsum" id="6RO0"/>
<dbReference type="SMR" id="P04981"/>
<dbReference type="STRING" id="257313.BP3786"/>
<dbReference type="TCDB" id="1.C.72.1.1">
    <property type="family name" value="the pertussis toxin (ptx) family"/>
</dbReference>
<dbReference type="PaxDb" id="257313-BP3786"/>
<dbReference type="ABCD" id="P04981">
    <property type="antibodies" value="46 sequenced antibodies"/>
</dbReference>
<dbReference type="KEGG" id="bpe:BP3786"/>
<dbReference type="PATRIC" id="fig|257313.5.peg.4090"/>
<dbReference type="HOGENOM" id="CLU_2045172_0_0_4"/>
<dbReference type="EvolutionaryTrace" id="P04981"/>
<dbReference type="Proteomes" id="UP000002676">
    <property type="component" value="Chromosome"/>
</dbReference>
<dbReference type="GO" id="GO:0005576">
    <property type="term" value="C:extracellular region"/>
    <property type="evidence" value="ECO:0007669"/>
    <property type="project" value="UniProtKB-SubCell"/>
</dbReference>
<dbReference type="GO" id="GO:0020002">
    <property type="term" value="C:host cell plasma membrane"/>
    <property type="evidence" value="ECO:0007669"/>
    <property type="project" value="UniProtKB-SubCell"/>
</dbReference>
<dbReference type="GO" id="GO:0016020">
    <property type="term" value="C:membrane"/>
    <property type="evidence" value="ECO:0007669"/>
    <property type="project" value="UniProtKB-KW"/>
</dbReference>
<dbReference type="GO" id="GO:0090729">
    <property type="term" value="F:toxin activity"/>
    <property type="evidence" value="ECO:0007669"/>
    <property type="project" value="UniProtKB-KW"/>
</dbReference>
<dbReference type="Gene3D" id="2.40.50.110">
    <property type="match status" value="1"/>
</dbReference>
<dbReference type="InterPro" id="IPR008992">
    <property type="entry name" value="Enterotoxin"/>
</dbReference>
<dbReference type="InterPro" id="IPR015356">
    <property type="entry name" value="Pertussis_toxin_subS5"/>
</dbReference>
<dbReference type="Pfam" id="PF09276">
    <property type="entry name" value="Pertus-S5-tox"/>
    <property type="match status" value="1"/>
</dbReference>
<dbReference type="SUPFAM" id="SSF50203">
    <property type="entry name" value="Bacterial enterotoxins"/>
    <property type="match status" value="1"/>
</dbReference>
<comment type="function">
    <text>PTX oligomer B binds to receptors on the eukaryotic cell surface and facilitates the translocation of the toxic subunit across the cell membrane.</text>
</comment>
<comment type="subunit">
    <text>Pertussis toxin contains five different chains, S1-S5. They are organized into 2 functional subunits: A, composed of S1 (which is toxic) and B, containing S2, S3, S5, and two copies of S4 (B binds to the membrane receptors). Dimers of S2-S4 and S3-S4 are held together by S5.</text>
</comment>
<comment type="subcellular location">
    <subcellularLocation>
        <location>Secreted</location>
    </subcellularLocation>
    <subcellularLocation>
        <location evidence="1">Host cell membrane</location>
    </subcellularLocation>
</comment>
<comment type="sequence caution" evidence="1">
    <conflict type="erroneous initiation">
        <sequence resource="EMBL-CDS" id="AAA22984"/>
    </conflict>
</comment>
<accession>P04981</accession>
<reference key="1">
    <citation type="journal article" date="1986" name="Proc. Natl. Acad. Sci. U.S.A.">
        <title>Cloning and sequencing of the pertussis toxin genes: operon structure and gene duplication.</title>
        <authorList>
            <person name="Nicosia A."/>
            <person name="Perugini M."/>
            <person name="Franzini C."/>
            <person name="Casagli M.C."/>
            <person name="Borri M.G."/>
            <person name="Antoni G."/>
            <person name="Almoni M."/>
            <person name="Neri P."/>
            <person name="Ratti G."/>
            <person name="Rappuoli R."/>
        </authorList>
    </citation>
    <scope>NUCLEOTIDE SEQUENCE [GENOMIC DNA]</scope>
    <source>
        <strain>BP165</strain>
    </source>
</reference>
<reference key="2">
    <citation type="journal article" date="1986" name="Science">
        <title>Pertussis toxin gene: nucleotide sequence and genetic organization.</title>
        <authorList>
            <person name="Locht C."/>
            <person name="Keith J.M."/>
        </authorList>
    </citation>
    <scope>NUCLEOTIDE SEQUENCE [GENOMIC DNA]</scope>
</reference>
<reference key="3">
    <citation type="journal article" date="2003" name="Nat. Genet.">
        <title>Comparative analysis of the genome sequences of Bordetella pertussis, Bordetella parapertussis and Bordetella bronchiseptica.</title>
        <authorList>
            <person name="Parkhill J."/>
            <person name="Sebaihia M."/>
            <person name="Preston A."/>
            <person name="Murphy L.D."/>
            <person name="Thomson N.R."/>
            <person name="Harris D.E."/>
            <person name="Holden M.T.G."/>
            <person name="Churcher C.M."/>
            <person name="Bentley S.D."/>
            <person name="Mungall K.L."/>
            <person name="Cerdeno-Tarraga A.-M."/>
            <person name="Temple L."/>
            <person name="James K.D."/>
            <person name="Harris B."/>
            <person name="Quail M.A."/>
            <person name="Achtman M."/>
            <person name="Atkin R."/>
            <person name="Baker S."/>
            <person name="Basham D."/>
            <person name="Bason N."/>
            <person name="Cherevach I."/>
            <person name="Chillingworth T."/>
            <person name="Collins M."/>
            <person name="Cronin A."/>
            <person name="Davis P."/>
            <person name="Doggett J."/>
            <person name="Feltwell T."/>
            <person name="Goble A."/>
            <person name="Hamlin N."/>
            <person name="Hauser H."/>
            <person name="Holroyd S."/>
            <person name="Jagels K."/>
            <person name="Leather S."/>
            <person name="Moule S."/>
            <person name="Norberczak H."/>
            <person name="O'Neil S."/>
            <person name="Ormond D."/>
            <person name="Price C."/>
            <person name="Rabbinowitsch E."/>
            <person name="Rutter S."/>
            <person name="Sanders M."/>
            <person name="Saunders D."/>
            <person name="Seeger K."/>
            <person name="Sharp S."/>
            <person name="Simmonds M."/>
            <person name="Skelton J."/>
            <person name="Squares R."/>
            <person name="Squares S."/>
            <person name="Stevens K."/>
            <person name="Unwin L."/>
            <person name="Whitehead S."/>
            <person name="Barrell B.G."/>
            <person name="Maskell D.J."/>
        </authorList>
    </citation>
    <scope>NUCLEOTIDE SEQUENCE [LARGE SCALE GENOMIC DNA]</scope>
    <source>
        <strain>Tohama I / ATCC BAA-589 / NCTC 13251</strain>
    </source>
</reference>
<reference key="4">
    <citation type="journal article" date="1994" name="Structure">
        <title>The crystal structure of pertussis toxin.</title>
        <authorList>
            <person name="Stein P.E."/>
            <person name="Boodhoo A."/>
            <person name="Armstrong G.D."/>
            <person name="Cockle S.A."/>
            <person name="Klein M.H."/>
            <person name="Read R.J."/>
        </authorList>
    </citation>
    <scope>X-RAY CRYSTALLOGRAPHY (2.9 ANGSTROMS)</scope>
    <source>
        <strain>10536</strain>
    </source>
</reference>
<reference key="5">
    <citation type="journal article" date="1996" name="J. Mol. Biol.">
        <title>Crystal structure of the pertussis toxin-ATP complex: a molecular sensor.</title>
        <authorList>
            <person name="Hazes B."/>
            <person name="Boodhoo A."/>
            <person name="Cockle S.A."/>
            <person name="Read R.J."/>
        </authorList>
    </citation>
    <scope>X-RAY CRYSTALLOGRAPHY (2.7 ANGSTROMS)</scope>
</reference>
<sequence length="133" mass="14500">MQRQAGLPLKANPMHTIASILLSVLGIYSPADVAGLPTHLYKNFTVQELALKLKGKNQEFCLTAFMSGRSLVRACLSDAGHEHDTWFDTMLGFAISAYALKSRIALTVEDSPYPGTPGDLLELQICPLNGYCE</sequence>
<name>TOX5_BORPE</name>
<protein>
    <recommendedName>
        <fullName>Pertussis toxin subunit 5</fullName>
        <shortName>PTX S5</shortName>
    </recommendedName>
    <alternativeName>
        <fullName>Islet-activating protein S5</fullName>
        <shortName>IAP S5</shortName>
    </alternativeName>
</protein>
<gene>
    <name type="primary">ptxE</name>
    <name type="ordered locus">BP3786</name>
</gene>
<proteinExistence type="evidence at protein level"/>
<feature type="signal peptide">
    <location>
        <begin position="1"/>
        <end position="34"/>
    </location>
</feature>
<feature type="chain" id="PRO_0000019364" description="Pertussis toxin subunit 5">
    <location>
        <begin position="35"/>
        <end position="133"/>
    </location>
</feature>
<feature type="disulfide bond">
    <location>
        <begin position="61"/>
        <end position="75"/>
    </location>
</feature>
<feature type="disulfide bond">
    <location>
        <begin position="126"/>
        <end position="132"/>
    </location>
</feature>
<feature type="strand" evidence="4">
    <location>
        <begin position="38"/>
        <end position="54"/>
    </location>
</feature>
<feature type="strand" evidence="4">
    <location>
        <begin position="57"/>
        <end position="65"/>
    </location>
</feature>
<feature type="strand" evidence="3">
    <location>
        <begin position="67"/>
        <end position="69"/>
    </location>
</feature>
<feature type="strand" evidence="4">
    <location>
        <begin position="72"/>
        <end position="77"/>
    </location>
</feature>
<feature type="helix" evidence="4">
    <location>
        <begin position="86"/>
        <end position="99"/>
    </location>
</feature>
<feature type="strand" evidence="4">
    <location>
        <begin position="103"/>
        <end position="109"/>
    </location>
</feature>
<feature type="strand" evidence="2">
    <location>
        <begin position="112"/>
        <end position="116"/>
    </location>
</feature>
<feature type="strand" evidence="4">
    <location>
        <begin position="118"/>
        <end position="125"/>
    </location>
</feature>